<dbReference type="EMBL" id="FR854393">
    <property type="protein sequence ID" value="CCA89438.1"/>
    <property type="molecule type" value="mRNA"/>
</dbReference>
<dbReference type="EMBL" id="AC091977">
    <property type="status" value="NOT_ANNOTATED_CDS"/>
    <property type="molecule type" value="Genomic_DNA"/>
</dbReference>
<dbReference type="CCDS" id="CCDS54853.1"/>
<dbReference type="RefSeq" id="NP_001177716.1">
    <property type="nucleotide sequence ID" value="NM_001190787.3"/>
</dbReference>
<dbReference type="PDB" id="4BRY">
    <property type="method" value="X-ray"/>
    <property type="resolution" value="2.89 A"/>
    <property type="chains" value="B=173-245"/>
</dbReference>
<dbReference type="PDBsum" id="4BRY"/>
<dbReference type="SMR" id="D6RGH6"/>
<dbReference type="BioGRID" id="131360">
    <property type="interactions" value="7"/>
</dbReference>
<dbReference type="ComplexPortal" id="CPX-661">
    <property type="entry name" value="IDAS-Geminin complex"/>
</dbReference>
<dbReference type="CORUM" id="D6RGH6"/>
<dbReference type="FunCoup" id="D6RGH6">
    <property type="interactions" value="1843"/>
</dbReference>
<dbReference type="IntAct" id="D6RGH6">
    <property type="interactions" value="6"/>
</dbReference>
<dbReference type="STRING" id="9606.ENSP00000426359"/>
<dbReference type="iPTMnet" id="D6RGH6"/>
<dbReference type="PhosphoSitePlus" id="D6RGH6"/>
<dbReference type="BioMuta" id="MCIDAS"/>
<dbReference type="MassIVE" id="D6RGH6"/>
<dbReference type="PaxDb" id="9606-ENSP00000426359"/>
<dbReference type="PeptideAtlas" id="D6RGH6"/>
<dbReference type="ProteomicsDB" id="14702"/>
<dbReference type="Antibodypedia" id="62363">
    <property type="antibodies" value="98 antibodies from 16 providers"/>
</dbReference>
<dbReference type="DNASU" id="345643"/>
<dbReference type="Ensembl" id="ENST00000513312.3">
    <property type="protein sequence ID" value="ENSP00000426359.1"/>
    <property type="gene ID" value="ENSG00000234602.9"/>
</dbReference>
<dbReference type="GeneID" id="345643"/>
<dbReference type="KEGG" id="hsa:345643"/>
<dbReference type="MANE-Select" id="ENST00000513312.3">
    <property type="protein sequence ID" value="ENSP00000426359.1"/>
    <property type="RefSeq nucleotide sequence ID" value="NM_001190787.3"/>
    <property type="RefSeq protein sequence ID" value="NP_001177716.1"/>
</dbReference>
<dbReference type="UCSC" id="uc021xyp.2">
    <property type="organism name" value="human"/>
</dbReference>
<dbReference type="AGR" id="HGNC:40050"/>
<dbReference type="CTD" id="345643"/>
<dbReference type="DisGeNET" id="345643"/>
<dbReference type="GeneCards" id="MCIDAS"/>
<dbReference type="GeneReviews" id="MCIDAS"/>
<dbReference type="HGNC" id="HGNC:40050">
    <property type="gene designation" value="MCIDAS"/>
</dbReference>
<dbReference type="HPA" id="ENSG00000234602">
    <property type="expression patterns" value="Tissue enhanced (parathyroid)"/>
</dbReference>
<dbReference type="MalaCards" id="MCIDAS"/>
<dbReference type="MIM" id="614086">
    <property type="type" value="gene"/>
</dbReference>
<dbReference type="MIM" id="618695">
    <property type="type" value="phenotype"/>
</dbReference>
<dbReference type="neXtProt" id="NX_D6RGH6"/>
<dbReference type="OpenTargets" id="ENSG00000234602"/>
<dbReference type="Orphanet" id="244">
    <property type="disease" value="Primary ciliary dyskinesia"/>
</dbReference>
<dbReference type="VEuPathDB" id="HostDB:ENSG00000234602"/>
<dbReference type="eggNOG" id="ENOG502R4B5">
    <property type="taxonomic scope" value="Eukaryota"/>
</dbReference>
<dbReference type="GeneTree" id="ENSGT00940000153270"/>
<dbReference type="HOGENOM" id="CLU_063884_0_0_1"/>
<dbReference type="InParanoid" id="D6RGH6"/>
<dbReference type="OMA" id="PCDISPF"/>
<dbReference type="OrthoDB" id="9445365at2759"/>
<dbReference type="PAN-GO" id="D6RGH6">
    <property type="GO annotations" value="3 GO annotations based on evolutionary models"/>
</dbReference>
<dbReference type="PhylomeDB" id="D6RGH6"/>
<dbReference type="PathwayCommons" id="D6RGH6"/>
<dbReference type="SignaLink" id="D6RGH6"/>
<dbReference type="BioGRID-ORCS" id="345643">
    <property type="hits" value="18 hits in 1145 CRISPR screens"/>
</dbReference>
<dbReference type="EvolutionaryTrace" id="D6RGH6"/>
<dbReference type="GenomeRNAi" id="345643"/>
<dbReference type="Pharos" id="D6RGH6">
    <property type="development level" value="Tbio"/>
</dbReference>
<dbReference type="PRO" id="PR:D6RGH6"/>
<dbReference type="Proteomes" id="UP000005640">
    <property type="component" value="Chromosome 5"/>
</dbReference>
<dbReference type="RNAct" id="D6RGH6">
    <property type="molecule type" value="protein"/>
</dbReference>
<dbReference type="Bgee" id="ENSG00000234602">
    <property type="expression patterns" value="Expressed in male germ line stem cell (sensu Vertebrata) in testis and 36 other cell types or tissues"/>
</dbReference>
<dbReference type="ExpressionAtlas" id="D6RGH6">
    <property type="expression patterns" value="baseline and differential"/>
</dbReference>
<dbReference type="GO" id="GO:0016604">
    <property type="term" value="C:nuclear body"/>
    <property type="evidence" value="ECO:0000314"/>
    <property type="project" value="HPA"/>
</dbReference>
<dbReference type="GO" id="GO:0005654">
    <property type="term" value="C:nucleoplasm"/>
    <property type="evidence" value="ECO:0000314"/>
    <property type="project" value="HPA"/>
</dbReference>
<dbReference type="GO" id="GO:0005634">
    <property type="term" value="C:nucleus"/>
    <property type="evidence" value="ECO:0000314"/>
    <property type="project" value="UniProtKB"/>
</dbReference>
<dbReference type="GO" id="GO:0042802">
    <property type="term" value="F:identical protein binding"/>
    <property type="evidence" value="ECO:0000353"/>
    <property type="project" value="IntAct"/>
</dbReference>
<dbReference type="GO" id="GO:0098534">
    <property type="term" value="P:centriole assembly"/>
    <property type="evidence" value="ECO:0000250"/>
    <property type="project" value="UniProtKB"/>
</dbReference>
<dbReference type="GO" id="GO:0060271">
    <property type="term" value="P:cilium assembly"/>
    <property type="evidence" value="ECO:0000250"/>
    <property type="project" value="UniProtKB"/>
</dbReference>
<dbReference type="GO" id="GO:0044458">
    <property type="term" value="P:motile cilium assembly"/>
    <property type="evidence" value="ECO:0000315"/>
    <property type="project" value="UniProtKB"/>
</dbReference>
<dbReference type="GO" id="GO:1903251">
    <property type="term" value="P:multi-ciliated epithelial cell differentiation"/>
    <property type="evidence" value="ECO:0000250"/>
    <property type="project" value="UniProtKB"/>
</dbReference>
<dbReference type="GO" id="GO:0045786">
    <property type="term" value="P:negative regulation of cell cycle"/>
    <property type="evidence" value="ECO:0000318"/>
    <property type="project" value="GO_Central"/>
</dbReference>
<dbReference type="GO" id="GO:0045944">
    <property type="term" value="P:positive regulation of transcription by RNA polymerase II"/>
    <property type="evidence" value="ECO:0000250"/>
    <property type="project" value="UniProtKB"/>
</dbReference>
<dbReference type="GO" id="GO:1902017">
    <property type="term" value="P:regulation of cilium assembly"/>
    <property type="evidence" value="ECO:0000315"/>
    <property type="project" value="UniProtKB"/>
</dbReference>
<dbReference type="GO" id="GO:0030174">
    <property type="term" value="P:regulation of DNA-templated DNA replication initiation"/>
    <property type="evidence" value="ECO:0000314"/>
    <property type="project" value="ComplexPortal"/>
</dbReference>
<dbReference type="GO" id="GO:0007346">
    <property type="term" value="P:regulation of mitotic cell cycle"/>
    <property type="evidence" value="ECO:0000314"/>
    <property type="project" value="ComplexPortal"/>
</dbReference>
<dbReference type="GO" id="GO:0072520">
    <property type="term" value="P:seminiferous tubule development"/>
    <property type="evidence" value="ECO:0007669"/>
    <property type="project" value="Ensembl"/>
</dbReference>
<dbReference type="GO" id="GO:0007338">
    <property type="term" value="P:single fertilization"/>
    <property type="evidence" value="ECO:0007669"/>
    <property type="project" value="Ensembl"/>
</dbReference>
<dbReference type="GO" id="GO:0007283">
    <property type="term" value="P:spermatogenesis"/>
    <property type="evidence" value="ECO:0007669"/>
    <property type="project" value="Ensembl"/>
</dbReference>
<dbReference type="CDD" id="cd22590">
    <property type="entry name" value="McIdas_CC"/>
    <property type="match status" value="1"/>
</dbReference>
<dbReference type="FunFam" id="1.20.5.1180:FF:000001">
    <property type="entry name" value="Truncated geminin"/>
    <property type="match status" value="1"/>
</dbReference>
<dbReference type="Gene3D" id="1.20.5.1180">
    <property type="entry name" value="Geminin coiled-coil domain"/>
    <property type="match status" value="1"/>
</dbReference>
<dbReference type="InterPro" id="IPR022786">
    <property type="entry name" value="Geminin/Multicilin"/>
</dbReference>
<dbReference type="PANTHER" id="PTHR13372">
    <property type="entry name" value="GEMININ"/>
    <property type="match status" value="1"/>
</dbReference>
<dbReference type="PANTHER" id="PTHR13372:SF3">
    <property type="entry name" value="MULTICILIN"/>
    <property type="match status" value="1"/>
</dbReference>
<dbReference type="Pfam" id="PF07412">
    <property type="entry name" value="Geminin"/>
    <property type="match status" value="1"/>
</dbReference>
<dbReference type="SUPFAM" id="SSF111469">
    <property type="entry name" value="Geminin coiled-coil domain"/>
    <property type="match status" value="1"/>
</dbReference>
<organism>
    <name type="scientific">Homo sapiens</name>
    <name type="common">Human</name>
    <dbReference type="NCBI Taxonomy" id="9606"/>
    <lineage>
        <taxon>Eukaryota</taxon>
        <taxon>Metazoa</taxon>
        <taxon>Chordata</taxon>
        <taxon>Craniata</taxon>
        <taxon>Vertebrata</taxon>
        <taxon>Euteleostomi</taxon>
        <taxon>Mammalia</taxon>
        <taxon>Eutheria</taxon>
        <taxon>Euarchontoglires</taxon>
        <taxon>Primates</taxon>
        <taxon>Haplorrhini</taxon>
        <taxon>Catarrhini</taxon>
        <taxon>Hominidae</taxon>
        <taxon>Homo</taxon>
    </lineage>
</organism>
<comment type="function">
    <text evidence="1 3 4 5">Transcription regulator specifically required for multiciliate cell differentiation (PubMed:25048963). Acts in a multiprotein complex containing E2F4 and E2F5 that binds and activates genes required for centriole biogenesis. Required for the deuterosome-mediated acentriolar pathway (PubMed:25048963). Plays a role in mitotic cell cycle progression by promoting cell cycle exit. Modulates GMNN activity by reducing its affinity for CDT1 (PubMed:21543332, PubMed:24064211).</text>
</comment>
<comment type="subunit">
    <text evidence="3 4">Heterodimer (via coiled-coil domain) with GMNN (via coiled-coil domain); targets GMNN to the nucleus. Can form homodimers (in vitro, via coiled-coil domain), but these are much less stable than the heterodimer formed with GMNN.</text>
</comment>
<comment type="interaction">
    <interactant intactId="EBI-3954372">
        <id>D6RGH6</id>
    </interactant>
    <interactant intactId="EBI-358049">
        <id>Q13895</id>
        <label>BYSL</label>
    </interactant>
    <organismsDiffer>false</organismsDiffer>
    <experiments>3</experiments>
</comment>
<comment type="interaction">
    <interactant intactId="EBI-3954372">
        <id>D6RGH6</id>
    </interactant>
    <interactant intactId="EBI-371669">
        <id>O75496</id>
        <label>GMNN</label>
    </interactant>
    <organismsDiffer>false</organismsDiffer>
    <experiments>9</experiments>
</comment>
<comment type="interaction">
    <interactant intactId="EBI-3954372">
        <id>D6RGH6</id>
    </interactant>
    <interactant intactId="EBI-3954372">
        <id>D6RGH6</id>
        <label>MCIDAS</label>
    </interactant>
    <organismsDiffer>false</organismsDiffer>
    <experiments>2</experiments>
</comment>
<comment type="interaction">
    <interactant intactId="EBI-3954372">
        <id>D6RGH6</id>
    </interactant>
    <interactant intactId="EBI-11955057">
        <id>Q8N8B7-2</id>
        <label>TCEANC</label>
    </interactant>
    <organismsDiffer>false</organismsDiffer>
    <experiments>3</experiments>
</comment>
<comment type="interaction">
    <interactant intactId="EBI-3954372">
        <id>D6RGH6</id>
    </interactant>
    <interactant intactId="EBI-744471">
        <id>O43167</id>
        <label>ZBTB24</label>
    </interactant>
    <organismsDiffer>false</organismsDiffer>
    <experiments>3</experiments>
</comment>
<comment type="subcellular location">
    <subcellularLocation>
        <location evidence="3 5">Nucleus</location>
    </subcellularLocation>
    <text evidence="3">Excluded from the nucleolus.</text>
</comment>
<comment type="developmental stage">
    <text evidence="3 5">Probable target of the anaphase promoting complex/cyclosome (APC/C) which regulates its level in the cell during the mitotic cell cycle. Highly expressed during interphase and early mitosis. Expression decreases during anaphase to become undetectable during telophase and cytokinesis. Expressed in cells destined for multiciliated cell differentiation, its expression is very weak in fully differentiated ciliated respiratory cells (PubMed:25048963).</text>
</comment>
<comment type="disease" evidence="5">
    <disease id="DI-05714">
        <name>Ciliary dyskinesia, primary, 42</name>
        <acronym>CILD42</acronym>
        <description>A form of primary ciliary dyskinesia, a disorder characterized by abnormalities of motile cilia. Respiratory infections leading to chronic inflammation and bronchiectasis are recurrent, due to defects in the respiratory cilia. Other more variable features may include infertility and mild hydrocephalus. Patients with this form of the disorder do not have situs abnormalities. CILD42 inheritance is autosomal recessive.</description>
        <dbReference type="MIM" id="618695"/>
    </disease>
    <text>The disease is caused by variants affecting the gene represented in this entry.</text>
</comment>
<comment type="miscellaneous">
    <text evidence="7">Was named Idas in reference to the cousin of the Gemini in ancient Greek mythology.</text>
</comment>
<comment type="similarity">
    <text evidence="6">Belongs to the geminin family.</text>
</comment>
<gene>
    <name evidence="8" type="primary">MCIDAS</name>
    <name type="synonym">IDAS</name>
    <name type="synonym">MCI</name>
    <name type="synonym">MCIN</name>
</gene>
<accession>D6RGH6</accession>
<accession>C9JGY3</accession>
<accession>D6R920</accession>
<accession>F8KGQ8</accession>
<keyword id="KW-0002">3D-structure</keyword>
<keyword id="KW-0010">Activator</keyword>
<keyword id="KW-0131">Cell cycle</keyword>
<keyword id="KW-1186">Ciliopathy</keyword>
<keyword id="KW-0970">Cilium biogenesis/degradation</keyword>
<keyword id="KW-0175">Coiled coil</keyword>
<keyword id="KW-0225">Disease variant</keyword>
<keyword id="KW-0539">Nucleus</keyword>
<keyword id="KW-0990">Primary ciliary dyskinesia</keyword>
<keyword id="KW-1267">Proteomics identification</keyword>
<keyword id="KW-1185">Reference proteome</keyword>
<keyword id="KW-0804">Transcription</keyword>
<keyword id="KW-0805">Transcription regulation</keyword>
<sequence length="385" mass="41720">MQACGGGAAGRRAFDSICPNRMLALPGRALLCKPGKPERKFAPPRKFFPGCTGGSPVSVYEDPPDAEPTALPALTTIDLQDLADCSSLLGSDAPPGGDLAASQNHSHQTEADFNLQDFRDTVDDLISDSSSMMSPTLASGDFPFSPCDISPFGPCLSPPLDPRALQSPPLRPPDVPPPEQYWKEVADQNQRALGDALVENNQLHVTLTQKQEEIASLKERNVQLKELASRTRHLASVLDKLMITQSRDCGAAAEPFLLKAKAKRSLEELVSAAGQDCAEVDAILREISERCDEALQSRDPKRPRLLPEPANTDTRPGNLHGAFRGLRTDCSRSALNLSHSELEEGGSFSTRIRSHSTIRTLAFPQGNAFTIRTANGGYKFRWVPS</sequence>
<feature type="chain" id="PRO_0000411076" description="Multicilin">
    <location>
        <begin position="1"/>
        <end position="385"/>
    </location>
</feature>
<feature type="region of interest" description="Necessary and sufficient for its degradation during the cell cycle">
    <location>
        <begin position="1"/>
        <end position="130"/>
    </location>
</feature>
<feature type="region of interest" description="Disordered" evidence="2">
    <location>
        <begin position="86"/>
        <end position="111"/>
    </location>
</feature>
<feature type="region of interest" description="Necessary and sufficient for proper nuclear localization">
    <location>
        <begin position="131"/>
        <end position="385"/>
    </location>
</feature>
<feature type="region of interest" description="Necessary and sufficient for interaction with GMNN and sufficient for homodimerization" evidence="3">
    <location>
        <begin position="173"/>
        <end position="245"/>
    </location>
</feature>
<feature type="region of interest" description="Disordered" evidence="2">
    <location>
        <begin position="294"/>
        <end position="319"/>
    </location>
</feature>
<feature type="coiled-coil region" evidence="4">
    <location>
        <begin position="179"/>
        <end position="227"/>
    </location>
</feature>
<feature type="sequence variant" id="VAR_083455" description="In CILD42; reduced number of cilia and basal bodies." evidence="5">
    <location>
        <begin position="147"/>
        <end position="385"/>
    </location>
</feature>
<feature type="sequence variant" id="VAR_071800" description="In CILD42; reduced number of cilia and basal bodies; dbSNP:rs797045151." evidence="5">
    <original>G</original>
    <variation>D</variation>
    <location>
        <position position="366"/>
    </location>
</feature>
<feature type="sequence variant" id="VAR_071801" description="In CILD42; reduced expression; reduced number of cilia and basal bodies; dbSNP:rs797045152." evidence="5">
    <original>R</original>
    <variation>H</variation>
    <location>
        <position position="381"/>
    </location>
</feature>
<feature type="helix" evidence="9">
    <location>
        <begin position="178"/>
        <end position="225"/>
    </location>
</feature>
<feature type="helix" evidence="9">
    <location>
        <begin position="227"/>
        <end position="241"/>
    </location>
</feature>
<proteinExistence type="evidence at protein level"/>
<protein>
    <recommendedName>
        <fullName evidence="6">Multicilin</fullName>
    </recommendedName>
    <alternativeName>
        <fullName>Multiciliate differentiation and DNA synthesis-associated cell cycle protein</fullName>
        <shortName>McIdas protein</shortName>
    </alternativeName>
    <alternativeName>
        <fullName>Protein Idas</fullName>
    </alternativeName>
</protein>
<evidence type="ECO:0000250" key="1">
    <source>
        <dbReference type="UniProtKB" id="Q08B36"/>
    </source>
</evidence>
<evidence type="ECO:0000256" key="2">
    <source>
        <dbReference type="SAM" id="MobiDB-lite"/>
    </source>
</evidence>
<evidence type="ECO:0000269" key="3">
    <source>
    </source>
</evidence>
<evidence type="ECO:0000269" key="4">
    <source>
    </source>
</evidence>
<evidence type="ECO:0000269" key="5">
    <source>
    </source>
</evidence>
<evidence type="ECO:0000305" key="6"/>
<evidence type="ECO:0000305" key="7">
    <source>
    </source>
</evidence>
<evidence type="ECO:0000312" key="8">
    <source>
        <dbReference type="HGNC" id="HGNC:40050"/>
    </source>
</evidence>
<evidence type="ECO:0007829" key="9">
    <source>
        <dbReference type="PDB" id="4BRY"/>
    </source>
</evidence>
<name>MCIN_HUMAN</name>
<reference key="1">
    <citation type="journal article" date="2011" name="J. Biol. Chem.">
        <title>Idas, a novel phylogenetically conserved geminin-related protein, binds to geminin and is required for cell cycle progression.</title>
        <authorList>
            <person name="Pefani D.E."/>
            <person name="Dimaki M."/>
            <person name="Spella M."/>
            <person name="Karantzelis N."/>
            <person name="Mitsiki E."/>
            <person name="Kyrousi C."/>
            <person name="Symeonidou I.E."/>
            <person name="Perrakis A."/>
            <person name="Taraviras S."/>
            <person name="Lygerou Z."/>
        </authorList>
    </citation>
    <scope>NUCLEOTIDE SEQUENCE [MRNA]</scope>
    <scope>FUNCTION</scope>
    <scope>SUBCELLULAR LOCATION</scope>
    <scope>INTERACTION WITH GMNN</scope>
    <scope>HOMODIMERIZATION</scope>
    <scope>SUBUNIT</scope>
    <scope>DEVELOPMENTAL STAGE</scope>
</reference>
<reference key="2">
    <citation type="journal article" date="2004" name="Nature">
        <title>The DNA sequence and comparative analysis of human chromosome 5.</title>
        <authorList>
            <person name="Schmutz J."/>
            <person name="Martin J."/>
            <person name="Terry A."/>
            <person name="Couronne O."/>
            <person name="Grimwood J."/>
            <person name="Lowry S."/>
            <person name="Gordon L.A."/>
            <person name="Scott D."/>
            <person name="Xie G."/>
            <person name="Huang W."/>
            <person name="Hellsten U."/>
            <person name="Tran-Gyamfi M."/>
            <person name="She X."/>
            <person name="Prabhakar S."/>
            <person name="Aerts A."/>
            <person name="Altherr M."/>
            <person name="Bajorek E."/>
            <person name="Black S."/>
            <person name="Branscomb E."/>
            <person name="Caoile C."/>
            <person name="Challacombe J.F."/>
            <person name="Chan Y.M."/>
            <person name="Denys M."/>
            <person name="Detter J.C."/>
            <person name="Escobar J."/>
            <person name="Flowers D."/>
            <person name="Fotopulos D."/>
            <person name="Glavina T."/>
            <person name="Gomez M."/>
            <person name="Gonzales E."/>
            <person name="Goodstein D."/>
            <person name="Grigoriev I."/>
            <person name="Groza M."/>
            <person name="Hammon N."/>
            <person name="Hawkins T."/>
            <person name="Haydu L."/>
            <person name="Israni S."/>
            <person name="Jett J."/>
            <person name="Kadner K."/>
            <person name="Kimball H."/>
            <person name="Kobayashi A."/>
            <person name="Lopez F."/>
            <person name="Lou Y."/>
            <person name="Martinez D."/>
            <person name="Medina C."/>
            <person name="Morgan J."/>
            <person name="Nandkeshwar R."/>
            <person name="Noonan J.P."/>
            <person name="Pitluck S."/>
            <person name="Pollard M."/>
            <person name="Predki P."/>
            <person name="Priest J."/>
            <person name="Ramirez L."/>
            <person name="Retterer J."/>
            <person name="Rodriguez A."/>
            <person name="Rogers S."/>
            <person name="Salamov A."/>
            <person name="Salazar A."/>
            <person name="Thayer N."/>
            <person name="Tice H."/>
            <person name="Tsai M."/>
            <person name="Ustaszewska A."/>
            <person name="Vo N."/>
            <person name="Wheeler J."/>
            <person name="Wu K."/>
            <person name="Yang J."/>
            <person name="Dickson M."/>
            <person name="Cheng J.-F."/>
            <person name="Eichler E.E."/>
            <person name="Olsen A."/>
            <person name="Pennacchio L.A."/>
            <person name="Rokhsar D.S."/>
            <person name="Richardson P."/>
            <person name="Lucas S.M."/>
            <person name="Myers R.M."/>
            <person name="Rubin E.M."/>
        </authorList>
    </citation>
    <scope>NUCLEOTIDE SEQUENCE [LARGE SCALE GENOMIC DNA]</scope>
</reference>
<reference key="3">
    <citation type="journal article" date="2013" name="J. Biol. Chem.">
        <title>The Geminin and Idas coiled coils preferentially form a heterodimer that inhibits Geminin function in DNA replication licensing.</title>
        <authorList>
            <person name="Caillat C."/>
            <person name="Pefani E.D."/>
            <person name="Gillespie P.J."/>
            <person name="Taraviras S."/>
            <person name="Blow J.J."/>
            <person name="Lygerou Z."/>
            <person name="Perrakis A."/>
        </authorList>
    </citation>
    <scope>X-RAY CRYSTALLOGRAPHY (2.89 ANGSTROMS) OF 173-245 IN COMPLEX WITH GMNN</scope>
    <scope>FUNCTION</scope>
    <scope>COILED-COIL DOMAIN</scope>
    <scope>SUBUNIT</scope>
</reference>
<reference key="4">
    <citation type="journal article" date="2014" name="Nat. Commun.">
        <title>MCIDAS mutations result in a mucociliary clearance disorder with reduced generation of multiple motile cilia.</title>
        <authorList>
            <person name="Boon M."/>
            <person name="Wallmeier J."/>
            <person name="Ma L."/>
            <person name="Loges N.T."/>
            <person name="Jaspers M."/>
            <person name="Olbrich H."/>
            <person name="Dougherty G.W."/>
            <person name="Raidt J."/>
            <person name="Werner C."/>
            <person name="Amirav I."/>
            <person name="Hevroni A."/>
            <person name="Abitbul R."/>
            <person name="Avital A."/>
            <person name="Soferman R."/>
            <person name="Wessels M."/>
            <person name="O'Callaghan C."/>
            <person name="Chung E.M."/>
            <person name="Rutman A."/>
            <person name="Hirst R.A."/>
            <person name="Moya E."/>
            <person name="Mitchison H.M."/>
            <person name="Van Daele S."/>
            <person name="De Boeck K."/>
            <person name="Jorissen M."/>
            <person name="Kintner C."/>
            <person name="Cuppens H."/>
            <person name="Omran H."/>
        </authorList>
    </citation>
    <scope>INVOLVEMENT IN CILD42</scope>
    <scope>VARIANTS CILD42 147-CYS--SER-385 DEL; ASP-366 AND HIS-381</scope>
    <scope>CHARACTERIZATION OF VARIANTS CILD42 147-CYS--SER-385 DEL; ASP-366 AND HIS-381</scope>
    <scope>DEVELOPMENTAL STAGE</scope>
    <scope>SUBCELLULAR LOCATION</scope>
    <scope>FUNCTION</scope>
</reference>